<protein>
    <recommendedName>
        <fullName evidence="1">Photosystem II reaction center protein I</fullName>
        <shortName evidence="1">PSII-I</shortName>
    </recommendedName>
    <alternativeName>
        <fullName evidence="1">PSII 4.4 kDa protein</fullName>
    </alternativeName>
</protein>
<reference key="1">
    <citation type="journal article" date="2001" name="DNA Res.">
        <title>Complete genomic sequence of the filamentous nitrogen-fixing cyanobacterium Anabaena sp. strain PCC 7120.</title>
        <authorList>
            <person name="Kaneko T."/>
            <person name="Nakamura Y."/>
            <person name="Wolk C.P."/>
            <person name="Kuritz T."/>
            <person name="Sasamoto S."/>
            <person name="Watanabe A."/>
            <person name="Iriguchi M."/>
            <person name="Ishikawa A."/>
            <person name="Kawashima K."/>
            <person name="Kimura T."/>
            <person name="Kishida Y."/>
            <person name="Kohara M."/>
            <person name="Matsumoto M."/>
            <person name="Matsuno A."/>
            <person name="Muraki A."/>
            <person name="Nakazaki N."/>
            <person name="Shimpo S."/>
            <person name="Sugimoto M."/>
            <person name="Takazawa M."/>
            <person name="Yamada M."/>
            <person name="Yasuda M."/>
            <person name="Tabata S."/>
        </authorList>
    </citation>
    <scope>NUCLEOTIDE SEQUENCE [LARGE SCALE GENOMIC DNA]</scope>
    <source>
        <strain>PCC 7120 / SAG 25.82 / UTEX 2576</strain>
    </source>
</reference>
<evidence type="ECO:0000255" key="1">
    <source>
        <dbReference type="HAMAP-Rule" id="MF_01316"/>
    </source>
</evidence>
<organism>
    <name type="scientific">Nostoc sp. (strain PCC 7120 / SAG 25.82 / UTEX 2576)</name>
    <dbReference type="NCBI Taxonomy" id="103690"/>
    <lineage>
        <taxon>Bacteria</taxon>
        <taxon>Bacillati</taxon>
        <taxon>Cyanobacteriota</taxon>
        <taxon>Cyanophyceae</taxon>
        <taxon>Nostocales</taxon>
        <taxon>Nostocaceae</taxon>
        <taxon>Nostoc</taxon>
    </lineage>
</organism>
<sequence length="38" mass="4301">MLTLKIAVYIVVAFFVAIFVFGFLSNDPARNPGRRDLE</sequence>
<comment type="function">
    <text evidence="1">One of the components of the core complex of photosystem II (PSII), required for its stability and/or assembly. PSII is a light-driven water:plastoquinone oxidoreductase that uses light energy to abstract electrons from H(2)O, generating O(2) and a proton gradient subsequently used for ATP formation. It consists of a core antenna complex that captures photons, and an electron transfer chain that converts photonic excitation into a charge separation.</text>
</comment>
<comment type="subunit">
    <text evidence="1">PSII is composed of 1 copy each of membrane proteins PsbA, PsbB, PsbC, PsbD, PsbE, PsbF, PsbH, PsbI, PsbJ, PsbK, PsbL, PsbM, PsbT, PsbX, PsbY, PsbZ, Psb30/Ycf12, peripheral proteins PsbO, CyanoQ (PsbQ), PsbU, PsbV and a large number of cofactors. It forms dimeric complexes.</text>
</comment>
<comment type="subcellular location">
    <subcellularLocation>
        <location evidence="1">Cellular thylakoid membrane</location>
        <topology evidence="1">Single-pass membrane protein</topology>
    </subcellularLocation>
</comment>
<comment type="similarity">
    <text evidence="1">Belongs to the PsbI family.</text>
</comment>
<accession>Q8YXD6</accession>
<name>PSBI_NOSS1</name>
<proteinExistence type="inferred from homology"/>
<dbReference type="EMBL" id="BA000019">
    <property type="protein sequence ID" value="BAB73234.1"/>
    <property type="molecule type" value="Genomic_DNA"/>
</dbReference>
<dbReference type="PIR" id="AB1966">
    <property type="entry name" value="AB1966"/>
</dbReference>
<dbReference type="RefSeq" id="WP_010995449.1">
    <property type="nucleotide sequence ID" value="NZ_RSCN01000021.1"/>
</dbReference>
<dbReference type="SMR" id="Q8YXD6"/>
<dbReference type="STRING" id="103690.gene:10493291"/>
<dbReference type="KEGG" id="ana:asr1277"/>
<dbReference type="eggNOG" id="ENOG5033CII">
    <property type="taxonomic scope" value="Bacteria"/>
</dbReference>
<dbReference type="Proteomes" id="UP000002483">
    <property type="component" value="Chromosome"/>
</dbReference>
<dbReference type="GO" id="GO:0009539">
    <property type="term" value="C:photosystem II reaction center"/>
    <property type="evidence" value="ECO:0007669"/>
    <property type="project" value="InterPro"/>
</dbReference>
<dbReference type="GO" id="GO:0031676">
    <property type="term" value="C:plasma membrane-derived thylakoid membrane"/>
    <property type="evidence" value="ECO:0007669"/>
    <property type="project" value="UniProtKB-SubCell"/>
</dbReference>
<dbReference type="GO" id="GO:0015979">
    <property type="term" value="P:photosynthesis"/>
    <property type="evidence" value="ECO:0007669"/>
    <property type="project" value="UniProtKB-UniRule"/>
</dbReference>
<dbReference type="HAMAP" id="MF_01316">
    <property type="entry name" value="PSII_PsbI"/>
    <property type="match status" value="1"/>
</dbReference>
<dbReference type="InterPro" id="IPR003686">
    <property type="entry name" value="PSII_PsbI"/>
</dbReference>
<dbReference type="InterPro" id="IPR037271">
    <property type="entry name" value="PSII_PsbI_sf"/>
</dbReference>
<dbReference type="NCBIfam" id="NF002735">
    <property type="entry name" value="PRK02655.1"/>
    <property type="match status" value="1"/>
</dbReference>
<dbReference type="PANTHER" id="PTHR35772">
    <property type="entry name" value="PHOTOSYSTEM II REACTION CENTER PROTEIN I"/>
    <property type="match status" value="1"/>
</dbReference>
<dbReference type="PANTHER" id="PTHR35772:SF1">
    <property type="entry name" value="PHOTOSYSTEM II REACTION CENTER PROTEIN I"/>
    <property type="match status" value="1"/>
</dbReference>
<dbReference type="Pfam" id="PF02532">
    <property type="entry name" value="PsbI"/>
    <property type="match status" value="1"/>
</dbReference>
<dbReference type="SUPFAM" id="SSF161041">
    <property type="entry name" value="Photosystem II reaction center protein I, PsbI"/>
    <property type="match status" value="1"/>
</dbReference>
<gene>
    <name evidence="1" type="primary">psbI</name>
    <name type="ordered locus">asr1277</name>
</gene>
<keyword id="KW-0472">Membrane</keyword>
<keyword id="KW-0602">Photosynthesis</keyword>
<keyword id="KW-0604">Photosystem II</keyword>
<keyword id="KW-0674">Reaction center</keyword>
<keyword id="KW-1185">Reference proteome</keyword>
<keyword id="KW-0793">Thylakoid</keyword>
<keyword id="KW-0812">Transmembrane</keyword>
<keyword id="KW-1133">Transmembrane helix</keyword>
<feature type="chain" id="PRO_0000219659" description="Photosystem II reaction center protein I">
    <location>
        <begin position="1"/>
        <end position="38"/>
    </location>
</feature>
<feature type="transmembrane region" description="Helical" evidence="1">
    <location>
        <begin position="4"/>
        <end position="24"/>
    </location>
</feature>